<name>PDXS_STAA3</name>
<dbReference type="EC" id="4.3.3.6" evidence="1"/>
<dbReference type="EMBL" id="CP000255">
    <property type="protein sequence ID" value="ABD21397.1"/>
    <property type="molecule type" value="Genomic_DNA"/>
</dbReference>
<dbReference type="RefSeq" id="WP_000034728.1">
    <property type="nucleotide sequence ID" value="NZ_CP027476.1"/>
</dbReference>
<dbReference type="SMR" id="Q2FJC1"/>
<dbReference type="GeneID" id="66838811"/>
<dbReference type="KEGG" id="saa:SAUSA300_0504"/>
<dbReference type="HOGENOM" id="CLU_055352_1_0_9"/>
<dbReference type="OMA" id="RYANRGW"/>
<dbReference type="UniPathway" id="UPA00245"/>
<dbReference type="Proteomes" id="UP000001939">
    <property type="component" value="Chromosome"/>
</dbReference>
<dbReference type="GO" id="GO:0036381">
    <property type="term" value="F:pyridoxal 5'-phosphate synthase (glutamine hydrolysing) activity"/>
    <property type="evidence" value="ECO:0007669"/>
    <property type="project" value="UniProtKB-UniRule"/>
</dbReference>
<dbReference type="GO" id="GO:0006520">
    <property type="term" value="P:amino acid metabolic process"/>
    <property type="evidence" value="ECO:0007669"/>
    <property type="project" value="TreeGrafter"/>
</dbReference>
<dbReference type="GO" id="GO:0042823">
    <property type="term" value="P:pyridoxal phosphate biosynthetic process"/>
    <property type="evidence" value="ECO:0007669"/>
    <property type="project" value="UniProtKB-UniRule"/>
</dbReference>
<dbReference type="GO" id="GO:0008615">
    <property type="term" value="P:pyridoxine biosynthetic process"/>
    <property type="evidence" value="ECO:0007669"/>
    <property type="project" value="TreeGrafter"/>
</dbReference>
<dbReference type="CDD" id="cd04727">
    <property type="entry name" value="pdxS"/>
    <property type="match status" value="1"/>
</dbReference>
<dbReference type="FunFam" id="3.20.20.70:FF:000001">
    <property type="entry name" value="Pyridoxine biosynthesis protein PDX1"/>
    <property type="match status" value="1"/>
</dbReference>
<dbReference type="Gene3D" id="3.20.20.70">
    <property type="entry name" value="Aldolase class I"/>
    <property type="match status" value="1"/>
</dbReference>
<dbReference type="HAMAP" id="MF_01824">
    <property type="entry name" value="PdxS"/>
    <property type="match status" value="1"/>
</dbReference>
<dbReference type="InterPro" id="IPR013785">
    <property type="entry name" value="Aldolase_TIM"/>
</dbReference>
<dbReference type="InterPro" id="IPR001852">
    <property type="entry name" value="PdxS/SNZ"/>
</dbReference>
<dbReference type="InterPro" id="IPR033755">
    <property type="entry name" value="PdxS/SNZ_N"/>
</dbReference>
<dbReference type="InterPro" id="IPR011060">
    <property type="entry name" value="RibuloseP-bd_barrel"/>
</dbReference>
<dbReference type="NCBIfam" id="NF003215">
    <property type="entry name" value="PRK04180.1"/>
    <property type="match status" value="1"/>
</dbReference>
<dbReference type="NCBIfam" id="TIGR00343">
    <property type="entry name" value="pyridoxal 5'-phosphate synthase lyase subunit PdxS"/>
    <property type="match status" value="1"/>
</dbReference>
<dbReference type="PANTHER" id="PTHR31829">
    <property type="entry name" value="PYRIDOXAL 5'-PHOSPHATE SYNTHASE SUBUNIT SNZ1-RELATED"/>
    <property type="match status" value="1"/>
</dbReference>
<dbReference type="PANTHER" id="PTHR31829:SF0">
    <property type="entry name" value="PYRIDOXAL 5'-PHOSPHATE SYNTHASE SUBUNIT SNZ1-RELATED"/>
    <property type="match status" value="1"/>
</dbReference>
<dbReference type="Pfam" id="PF01680">
    <property type="entry name" value="SOR_SNZ"/>
    <property type="match status" value="1"/>
</dbReference>
<dbReference type="PIRSF" id="PIRSF029271">
    <property type="entry name" value="Pdx1"/>
    <property type="match status" value="1"/>
</dbReference>
<dbReference type="SUPFAM" id="SSF51366">
    <property type="entry name" value="Ribulose-phoshate binding barrel"/>
    <property type="match status" value="1"/>
</dbReference>
<dbReference type="PROSITE" id="PS01235">
    <property type="entry name" value="PDXS_SNZ_1"/>
    <property type="match status" value="1"/>
</dbReference>
<dbReference type="PROSITE" id="PS51129">
    <property type="entry name" value="PDXS_SNZ_2"/>
    <property type="match status" value="1"/>
</dbReference>
<organism>
    <name type="scientific">Staphylococcus aureus (strain USA300)</name>
    <dbReference type="NCBI Taxonomy" id="367830"/>
    <lineage>
        <taxon>Bacteria</taxon>
        <taxon>Bacillati</taxon>
        <taxon>Bacillota</taxon>
        <taxon>Bacilli</taxon>
        <taxon>Bacillales</taxon>
        <taxon>Staphylococcaceae</taxon>
        <taxon>Staphylococcus</taxon>
    </lineage>
</organism>
<proteinExistence type="inferred from homology"/>
<accession>Q2FJC1</accession>
<protein>
    <recommendedName>
        <fullName evidence="1">Pyridoxal 5'-phosphate synthase subunit PdxS</fullName>
        <shortName evidence="1">PLP synthase subunit PdxS</shortName>
        <ecNumber evidence="1">4.3.3.6</ecNumber>
    </recommendedName>
    <alternativeName>
        <fullName evidence="1">Pdx1</fullName>
    </alternativeName>
</protein>
<reference key="1">
    <citation type="journal article" date="2006" name="Lancet">
        <title>Complete genome sequence of USA300, an epidemic clone of community-acquired meticillin-resistant Staphylococcus aureus.</title>
        <authorList>
            <person name="Diep B.A."/>
            <person name="Gill S.R."/>
            <person name="Chang R.F."/>
            <person name="Phan T.H."/>
            <person name="Chen J.H."/>
            <person name="Davidson M.G."/>
            <person name="Lin F."/>
            <person name="Lin J."/>
            <person name="Carleton H.A."/>
            <person name="Mongodin E.F."/>
            <person name="Sensabaugh G.F."/>
            <person name="Perdreau-Remington F."/>
        </authorList>
    </citation>
    <scope>NUCLEOTIDE SEQUENCE [LARGE SCALE GENOMIC DNA]</scope>
    <source>
        <strain>USA300</strain>
    </source>
</reference>
<gene>
    <name evidence="1" type="primary">pdxS</name>
    <name type="ordered locus">SAUSA300_0504</name>
</gene>
<evidence type="ECO:0000255" key="1">
    <source>
        <dbReference type="HAMAP-Rule" id="MF_01824"/>
    </source>
</evidence>
<sequence>MSKIIGSDRVKRGMAEMQKGGVIMDVVNAEQARIAEEAGAVAVMALERVPSDIRAAGGVARMANPKIVEEVMNAVSIPVMAKARIGHITEARVLEAMGVDYIDESEVLTPADEEYHLRKDQFTVPFVCGCRNLGEAARRIGEGAAMLRTKGEPGTGNIVEAVRHMRQVNSEVSRLTVMNDDEIMTFAKDIGAPYEILKQIKDNGRLPVVNFAAGGVATPQDAALMMELGADGVFVGSGIFKSEDPEKFAKAIVQATTHYQDYELIGRLASELGTAMKGLDINQLSLEERMQERGW</sequence>
<keyword id="KW-0456">Lyase</keyword>
<keyword id="KW-0663">Pyridoxal phosphate</keyword>
<keyword id="KW-0704">Schiff base</keyword>
<feature type="chain" id="PRO_1000070396" description="Pyridoxal 5'-phosphate synthase subunit PdxS">
    <location>
        <begin position="1"/>
        <end position="295"/>
    </location>
</feature>
<feature type="active site" description="Schiff-base intermediate with D-ribose 5-phosphate" evidence="1">
    <location>
        <position position="82"/>
    </location>
</feature>
<feature type="binding site" evidence="1">
    <location>
        <position position="25"/>
    </location>
    <ligand>
        <name>D-ribose 5-phosphate</name>
        <dbReference type="ChEBI" id="CHEBI:78346"/>
    </ligand>
</feature>
<feature type="binding site" evidence="1">
    <location>
        <position position="154"/>
    </location>
    <ligand>
        <name>D-ribose 5-phosphate</name>
        <dbReference type="ChEBI" id="CHEBI:78346"/>
    </ligand>
</feature>
<feature type="binding site" evidence="1">
    <location>
        <position position="166"/>
    </location>
    <ligand>
        <name>D-glyceraldehyde 3-phosphate</name>
        <dbReference type="ChEBI" id="CHEBI:59776"/>
    </ligand>
</feature>
<feature type="binding site" evidence="1">
    <location>
        <position position="215"/>
    </location>
    <ligand>
        <name>D-ribose 5-phosphate</name>
        <dbReference type="ChEBI" id="CHEBI:78346"/>
    </ligand>
</feature>
<feature type="binding site" evidence="1">
    <location>
        <begin position="236"/>
        <end position="237"/>
    </location>
    <ligand>
        <name>D-ribose 5-phosphate</name>
        <dbReference type="ChEBI" id="CHEBI:78346"/>
    </ligand>
</feature>
<comment type="function">
    <text evidence="1">Catalyzes the formation of pyridoxal 5'-phosphate from ribose 5-phosphate (RBP), glyceraldehyde 3-phosphate (G3P) and ammonia. The ammonia is provided by the PdxT subunit. Can also use ribulose 5-phosphate and dihydroxyacetone phosphate as substrates, resulting from enzyme-catalyzed isomerization of RBP and G3P, respectively.</text>
</comment>
<comment type="catalytic activity">
    <reaction evidence="1">
        <text>aldehydo-D-ribose 5-phosphate + D-glyceraldehyde 3-phosphate + L-glutamine = pyridoxal 5'-phosphate + L-glutamate + phosphate + 3 H2O + H(+)</text>
        <dbReference type="Rhea" id="RHEA:31507"/>
        <dbReference type="ChEBI" id="CHEBI:15377"/>
        <dbReference type="ChEBI" id="CHEBI:15378"/>
        <dbReference type="ChEBI" id="CHEBI:29985"/>
        <dbReference type="ChEBI" id="CHEBI:43474"/>
        <dbReference type="ChEBI" id="CHEBI:58273"/>
        <dbReference type="ChEBI" id="CHEBI:58359"/>
        <dbReference type="ChEBI" id="CHEBI:59776"/>
        <dbReference type="ChEBI" id="CHEBI:597326"/>
        <dbReference type="EC" id="4.3.3.6"/>
    </reaction>
</comment>
<comment type="pathway">
    <text evidence="1">Cofactor biosynthesis; pyridoxal 5'-phosphate biosynthesis.</text>
</comment>
<comment type="subunit">
    <text evidence="1">In the presence of PdxT, forms a dodecamer of heterodimers.</text>
</comment>
<comment type="similarity">
    <text evidence="1">Belongs to the PdxS/SNZ family.</text>
</comment>